<proteinExistence type="evidence at protein level"/>
<feature type="signal peptide" evidence="2">
    <location>
        <begin position="1"/>
        <end position="29"/>
    </location>
</feature>
<feature type="chain" id="PRO_0000034349" description="Metalloproteinase inhibitor 4">
    <location>
        <begin position="30"/>
        <end position="224"/>
    </location>
</feature>
<feature type="domain" description="NTR" evidence="3">
    <location>
        <begin position="30"/>
        <end position="156"/>
    </location>
</feature>
<feature type="region of interest" description="Involved in metalloproteinase-binding" evidence="1">
    <location>
        <begin position="30"/>
        <end position="33"/>
    </location>
</feature>
<feature type="region of interest" description="Involved in metalloproteinase-binding" evidence="1">
    <location>
        <begin position="99"/>
        <end position="100"/>
    </location>
</feature>
<feature type="binding site" evidence="1">
    <location>
        <position position="30"/>
    </location>
    <ligand>
        <name>Zn(2+)</name>
        <dbReference type="ChEBI" id="CHEBI:29105"/>
        <note>ligand shared with metalloproteinase partner</note>
    </ligand>
</feature>
<feature type="site" description="Involved in metalloproteinase-binding" evidence="1">
    <location>
        <position position="69"/>
    </location>
</feature>
<feature type="disulfide bond" evidence="3">
    <location>
        <begin position="30"/>
        <end position="102"/>
    </location>
</feature>
<feature type="disulfide bond" evidence="3">
    <location>
        <begin position="32"/>
        <end position="131"/>
    </location>
</feature>
<feature type="disulfide bond" evidence="3">
    <location>
        <begin position="42"/>
        <end position="156"/>
    </location>
</feature>
<feature type="disulfide bond" evidence="3">
    <location>
        <begin position="158"/>
        <end position="205"/>
    </location>
</feature>
<feature type="disulfide bond" evidence="3">
    <location>
        <begin position="163"/>
        <end position="168"/>
    </location>
</feature>
<feature type="disulfide bond" evidence="3">
    <location>
        <begin position="176"/>
        <end position="197"/>
    </location>
</feature>
<reference key="1">
    <citation type="journal article" date="1996" name="J. Biol. Chem.">
        <title>Molecular cloning and characterization of human tissue inhibitor of metalloproteinase 4.</title>
        <authorList>
            <person name="Greene J."/>
            <person name="Wang M."/>
            <person name="Liu Y.E."/>
            <person name="Raymond L.A."/>
            <person name="Rosen C."/>
            <person name="Shi Y.E."/>
        </authorList>
    </citation>
    <scope>NUCLEOTIDE SEQUENCE [MRNA]</scope>
    <source>
        <tissue>Heart</tissue>
    </source>
</reference>
<reference key="2">
    <citation type="journal article" date="1998" name="Genomics">
        <title>Cloning of the human tissue inhibitor of metalloproteinase-4 gene (TIMP4) and localization of the TIMP4 and timp4 genes to human chromosome 3p25 and mouse chromosome 6, respectively.</title>
        <authorList>
            <person name="Olson T.M."/>
            <person name="Hirohata S."/>
            <person name="Ye J."/>
            <person name="Leco K."/>
            <person name="Seldin M.F."/>
            <person name="Apte S.S."/>
        </authorList>
    </citation>
    <scope>NUCLEOTIDE SEQUENCE [GENOMIC DNA]</scope>
</reference>
<reference key="3">
    <citation type="submission" date="2003-05" db="EMBL/GenBank/DDBJ databases">
        <title>Cloning of human full-length CDSs in BD Creator(TM) system donor vector.</title>
        <authorList>
            <person name="Kalnine N."/>
            <person name="Chen X."/>
            <person name="Rolfs A."/>
            <person name="Halleck A."/>
            <person name="Hines L."/>
            <person name="Eisenstein S."/>
            <person name="Koundinya M."/>
            <person name="Raphael J."/>
            <person name="Moreira D."/>
            <person name="Kelley T."/>
            <person name="LaBaer J."/>
            <person name="Lin Y."/>
            <person name="Phelan M."/>
            <person name="Farmer A."/>
        </authorList>
    </citation>
    <scope>NUCLEOTIDE SEQUENCE [LARGE SCALE MRNA]</scope>
</reference>
<reference key="4">
    <citation type="journal article" date="2004" name="Nat. Genet.">
        <title>Complete sequencing and characterization of 21,243 full-length human cDNAs.</title>
        <authorList>
            <person name="Ota T."/>
            <person name="Suzuki Y."/>
            <person name="Nishikawa T."/>
            <person name="Otsuki T."/>
            <person name="Sugiyama T."/>
            <person name="Irie R."/>
            <person name="Wakamatsu A."/>
            <person name="Hayashi K."/>
            <person name="Sato H."/>
            <person name="Nagai K."/>
            <person name="Kimura K."/>
            <person name="Makita H."/>
            <person name="Sekine M."/>
            <person name="Obayashi M."/>
            <person name="Nishi T."/>
            <person name="Shibahara T."/>
            <person name="Tanaka T."/>
            <person name="Ishii S."/>
            <person name="Yamamoto J."/>
            <person name="Saito K."/>
            <person name="Kawai Y."/>
            <person name="Isono Y."/>
            <person name="Nakamura Y."/>
            <person name="Nagahari K."/>
            <person name="Murakami K."/>
            <person name="Yasuda T."/>
            <person name="Iwayanagi T."/>
            <person name="Wagatsuma M."/>
            <person name="Shiratori A."/>
            <person name="Sudo H."/>
            <person name="Hosoiri T."/>
            <person name="Kaku Y."/>
            <person name="Kodaira H."/>
            <person name="Kondo H."/>
            <person name="Sugawara M."/>
            <person name="Takahashi M."/>
            <person name="Kanda K."/>
            <person name="Yokoi T."/>
            <person name="Furuya T."/>
            <person name="Kikkawa E."/>
            <person name="Omura Y."/>
            <person name="Abe K."/>
            <person name="Kamihara K."/>
            <person name="Katsuta N."/>
            <person name="Sato K."/>
            <person name="Tanikawa M."/>
            <person name="Yamazaki M."/>
            <person name="Ninomiya K."/>
            <person name="Ishibashi T."/>
            <person name="Yamashita H."/>
            <person name="Murakawa K."/>
            <person name="Fujimori K."/>
            <person name="Tanai H."/>
            <person name="Kimata M."/>
            <person name="Watanabe M."/>
            <person name="Hiraoka S."/>
            <person name="Chiba Y."/>
            <person name="Ishida S."/>
            <person name="Ono Y."/>
            <person name="Takiguchi S."/>
            <person name="Watanabe S."/>
            <person name="Yosida M."/>
            <person name="Hotuta T."/>
            <person name="Kusano J."/>
            <person name="Kanehori K."/>
            <person name="Takahashi-Fujii A."/>
            <person name="Hara H."/>
            <person name="Tanase T.-O."/>
            <person name="Nomura Y."/>
            <person name="Togiya S."/>
            <person name="Komai F."/>
            <person name="Hara R."/>
            <person name="Takeuchi K."/>
            <person name="Arita M."/>
            <person name="Imose N."/>
            <person name="Musashino K."/>
            <person name="Yuuki H."/>
            <person name="Oshima A."/>
            <person name="Sasaki N."/>
            <person name="Aotsuka S."/>
            <person name="Yoshikawa Y."/>
            <person name="Matsunawa H."/>
            <person name="Ichihara T."/>
            <person name="Shiohata N."/>
            <person name="Sano S."/>
            <person name="Moriya S."/>
            <person name="Momiyama H."/>
            <person name="Satoh N."/>
            <person name="Takami S."/>
            <person name="Terashima Y."/>
            <person name="Suzuki O."/>
            <person name="Nakagawa S."/>
            <person name="Senoh A."/>
            <person name="Mizoguchi H."/>
            <person name="Goto Y."/>
            <person name="Shimizu F."/>
            <person name="Wakebe H."/>
            <person name="Hishigaki H."/>
            <person name="Watanabe T."/>
            <person name="Sugiyama A."/>
            <person name="Takemoto M."/>
            <person name="Kawakami B."/>
            <person name="Yamazaki M."/>
            <person name="Watanabe K."/>
            <person name="Kumagai A."/>
            <person name="Itakura S."/>
            <person name="Fukuzumi Y."/>
            <person name="Fujimori Y."/>
            <person name="Komiyama M."/>
            <person name="Tashiro H."/>
            <person name="Tanigami A."/>
            <person name="Fujiwara T."/>
            <person name="Ono T."/>
            <person name="Yamada K."/>
            <person name="Fujii Y."/>
            <person name="Ozaki K."/>
            <person name="Hirao M."/>
            <person name="Ohmori Y."/>
            <person name="Kawabata A."/>
            <person name="Hikiji T."/>
            <person name="Kobatake N."/>
            <person name="Inagaki H."/>
            <person name="Ikema Y."/>
            <person name="Okamoto S."/>
            <person name="Okitani R."/>
            <person name="Kawakami T."/>
            <person name="Noguchi S."/>
            <person name="Itoh T."/>
            <person name="Shigeta K."/>
            <person name="Senba T."/>
            <person name="Matsumura K."/>
            <person name="Nakajima Y."/>
            <person name="Mizuno T."/>
            <person name="Morinaga M."/>
            <person name="Sasaki M."/>
            <person name="Togashi T."/>
            <person name="Oyama M."/>
            <person name="Hata H."/>
            <person name="Watanabe M."/>
            <person name="Komatsu T."/>
            <person name="Mizushima-Sugano J."/>
            <person name="Satoh T."/>
            <person name="Shirai Y."/>
            <person name="Takahashi Y."/>
            <person name="Nakagawa K."/>
            <person name="Okumura K."/>
            <person name="Nagase T."/>
            <person name="Nomura N."/>
            <person name="Kikuchi H."/>
            <person name="Masuho Y."/>
            <person name="Yamashita R."/>
            <person name="Nakai K."/>
            <person name="Yada T."/>
            <person name="Nakamura Y."/>
            <person name="Ohara O."/>
            <person name="Isogai T."/>
            <person name="Sugano S."/>
        </authorList>
    </citation>
    <scope>NUCLEOTIDE SEQUENCE [LARGE SCALE MRNA]</scope>
    <source>
        <tissue>Cerebellum</tissue>
    </source>
</reference>
<reference key="5">
    <citation type="submission" date="2005-07" db="EMBL/GenBank/DDBJ databases">
        <authorList>
            <person name="Mural R.J."/>
            <person name="Istrail S."/>
            <person name="Sutton G.G."/>
            <person name="Florea L."/>
            <person name="Halpern A.L."/>
            <person name="Mobarry C.M."/>
            <person name="Lippert R."/>
            <person name="Walenz B."/>
            <person name="Shatkay H."/>
            <person name="Dew I."/>
            <person name="Miller J.R."/>
            <person name="Flanigan M.J."/>
            <person name="Edwards N.J."/>
            <person name="Bolanos R."/>
            <person name="Fasulo D."/>
            <person name="Halldorsson B.V."/>
            <person name="Hannenhalli S."/>
            <person name="Turner R."/>
            <person name="Yooseph S."/>
            <person name="Lu F."/>
            <person name="Nusskern D.R."/>
            <person name="Shue B.C."/>
            <person name="Zheng X.H."/>
            <person name="Zhong F."/>
            <person name="Delcher A.L."/>
            <person name="Huson D.H."/>
            <person name="Kravitz S.A."/>
            <person name="Mouchard L."/>
            <person name="Reinert K."/>
            <person name="Remington K.A."/>
            <person name="Clark A.G."/>
            <person name="Waterman M.S."/>
            <person name="Eichler E.E."/>
            <person name="Adams M.D."/>
            <person name="Hunkapiller M.W."/>
            <person name="Myers E.W."/>
            <person name="Venter J.C."/>
        </authorList>
    </citation>
    <scope>NUCLEOTIDE SEQUENCE [LARGE SCALE GENOMIC DNA]</scope>
</reference>
<reference key="6">
    <citation type="journal article" date="2004" name="Genome Res.">
        <title>The status, quality, and expansion of the NIH full-length cDNA project: the Mammalian Gene Collection (MGC).</title>
        <authorList>
            <consortium name="The MGC Project Team"/>
        </authorList>
    </citation>
    <scope>NUCLEOTIDE SEQUENCE [LARGE SCALE MRNA]</scope>
    <source>
        <tissue>Brain</tissue>
    </source>
</reference>
<protein>
    <recommendedName>
        <fullName>Metalloproteinase inhibitor 4</fullName>
    </recommendedName>
    <alternativeName>
        <fullName>Tissue inhibitor of metalloproteinases 4</fullName>
        <shortName>TIMP-4</shortName>
    </alternativeName>
</protein>
<comment type="function">
    <text>Complexes with metalloproteinases (such as collagenases) and irreversibly inactivates them by binding to their catalytic zinc cofactor. Known to act on MMP-1, MMP-2, MMP-3, MMP-7 and MMP-9.</text>
</comment>
<comment type="subcellular location">
    <subcellularLocation>
        <location>Secreted</location>
    </subcellularLocation>
</comment>
<comment type="tissue specificity">
    <text>Abundant in heart and present at low levels in many other tissues.</text>
</comment>
<comment type="similarity">
    <text evidence="4">Belongs to the protease inhibitor I35 (TIMP) family.</text>
</comment>
<organism>
    <name type="scientific">Homo sapiens</name>
    <name type="common">Human</name>
    <dbReference type="NCBI Taxonomy" id="9606"/>
    <lineage>
        <taxon>Eukaryota</taxon>
        <taxon>Metazoa</taxon>
        <taxon>Chordata</taxon>
        <taxon>Craniata</taxon>
        <taxon>Vertebrata</taxon>
        <taxon>Euteleostomi</taxon>
        <taxon>Mammalia</taxon>
        <taxon>Eutheria</taxon>
        <taxon>Euarchontoglires</taxon>
        <taxon>Primates</taxon>
        <taxon>Haplorrhini</taxon>
        <taxon>Catarrhini</taxon>
        <taxon>Hominidae</taxon>
        <taxon>Homo</taxon>
    </lineage>
</organism>
<dbReference type="EMBL" id="U76456">
    <property type="protein sequence ID" value="AAB40391.1"/>
    <property type="molecule type" value="mRNA"/>
</dbReference>
<dbReference type="EMBL" id="AF057532">
    <property type="protein sequence ID" value="AAC34422.1"/>
    <property type="molecule type" value="Genomic_DNA"/>
</dbReference>
<dbReference type="EMBL" id="AF057528">
    <property type="protein sequence ID" value="AAC34422.1"/>
    <property type="status" value="JOINED"/>
    <property type="molecule type" value="Genomic_DNA"/>
</dbReference>
<dbReference type="EMBL" id="AF057529">
    <property type="protein sequence ID" value="AAC34422.1"/>
    <property type="status" value="JOINED"/>
    <property type="molecule type" value="Genomic_DNA"/>
</dbReference>
<dbReference type="EMBL" id="AF057530">
    <property type="protein sequence ID" value="AAC34422.1"/>
    <property type="status" value="JOINED"/>
    <property type="molecule type" value="Genomic_DNA"/>
</dbReference>
<dbReference type="EMBL" id="AF057531">
    <property type="protein sequence ID" value="AAC34422.1"/>
    <property type="status" value="JOINED"/>
    <property type="molecule type" value="Genomic_DNA"/>
</dbReference>
<dbReference type="EMBL" id="BT019627">
    <property type="protein sequence ID" value="AAV38433.1"/>
    <property type="molecule type" value="mRNA"/>
</dbReference>
<dbReference type="EMBL" id="AK313018">
    <property type="protein sequence ID" value="BAG35853.1"/>
    <property type="molecule type" value="mRNA"/>
</dbReference>
<dbReference type="EMBL" id="CH471055">
    <property type="protein sequence ID" value="EAW64122.1"/>
    <property type="molecule type" value="Genomic_DNA"/>
</dbReference>
<dbReference type="EMBL" id="BC010553">
    <property type="protein sequence ID" value="AAH10553.1"/>
    <property type="molecule type" value="mRNA"/>
</dbReference>
<dbReference type="CCDS" id="CCDS2608.1"/>
<dbReference type="RefSeq" id="NP_003247.1">
    <property type="nucleotide sequence ID" value="NM_003256.4"/>
</dbReference>
<dbReference type="SMR" id="Q99727"/>
<dbReference type="BioGRID" id="112935">
    <property type="interactions" value="22"/>
</dbReference>
<dbReference type="FunCoup" id="Q99727">
    <property type="interactions" value="52"/>
</dbReference>
<dbReference type="IntAct" id="Q99727">
    <property type="interactions" value="1"/>
</dbReference>
<dbReference type="STRING" id="9606.ENSP00000287814"/>
<dbReference type="MEROPS" id="I35.004"/>
<dbReference type="iPTMnet" id="Q99727"/>
<dbReference type="PhosphoSitePlus" id="Q99727"/>
<dbReference type="BioMuta" id="TIMP4"/>
<dbReference type="DMDM" id="3915135"/>
<dbReference type="MassIVE" id="Q99727"/>
<dbReference type="PaxDb" id="9606-ENSP00000287814"/>
<dbReference type="PeptideAtlas" id="Q99727"/>
<dbReference type="ProteomicsDB" id="78441"/>
<dbReference type="Antibodypedia" id="3455">
    <property type="antibodies" value="576 antibodies from 36 providers"/>
</dbReference>
<dbReference type="DNASU" id="7079"/>
<dbReference type="Ensembl" id="ENST00000287814.5">
    <property type="protein sequence ID" value="ENSP00000287814.4"/>
    <property type="gene ID" value="ENSG00000157150.5"/>
</dbReference>
<dbReference type="GeneID" id="7079"/>
<dbReference type="KEGG" id="hsa:7079"/>
<dbReference type="MANE-Select" id="ENST00000287814.5">
    <property type="protein sequence ID" value="ENSP00000287814.4"/>
    <property type="RefSeq nucleotide sequence ID" value="NM_003256.4"/>
    <property type="RefSeq protein sequence ID" value="NP_003247.1"/>
</dbReference>
<dbReference type="UCSC" id="uc003bwo.4">
    <property type="organism name" value="human"/>
</dbReference>
<dbReference type="AGR" id="HGNC:11823"/>
<dbReference type="CTD" id="7079"/>
<dbReference type="DisGeNET" id="7079"/>
<dbReference type="GeneCards" id="TIMP4"/>
<dbReference type="HGNC" id="HGNC:11823">
    <property type="gene designation" value="TIMP4"/>
</dbReference>
<dbReference type="HPA" id="ENSG00000157150">
    <property type="expression patterns" value="Tissue enhanced (adipose tissue, breast)"/>
</dbReference>
<dbReference type="MIM" id="601915">
    <property type="type" value="gene"/>
</dbReference>
<dbReference type="neXtProt" id="NX_Q99727"/>
<dbReference type="OpenTargets" id="ENSG00000157150"/>
<dbReference type="PharmGKB" id="PA36529"/>
<dbReference type="VEuPathDB" id="HostDB:ENSG00000157150"/>
<dbReference type="eggNOG" id="KOG4745">
    <property type="taxonomic scope" value="Eukaryota"/>
</dbReference>
<dbReference type="GeneTree" id="ENSGT00940000159798"/>
<dbReference type="HOGENOM" id="CLU_084029_0_0_1"/>
<dbReference type="InParanoid" id="Q99727"/>
<dbReference type="OMA" id="ITTPNEC"/>
<dbReference type="OrthoDB" id="6041373at2759"/>
<dbReference type="PAN-GO" id="Q99727">
    <property type="GO annotations" value="8 GO annotations based on evolutionary models"/>
</dbReference>
<dbReference type="PhylomeDB" id="Q99727"/>
<dbReference type="TreeFam" id="TF317409"/>
<dbReference type="PathwayCommons" id="Q99727"/>
<dbReference type="SignaLink" id="Q99727"/>
<dbReference type="BioGRID-ORCS" id="7079">
    <property type="hits" value="8 hits in 1146 CRISPR screens"/>
</dbReference>
<dbReference type="ChiTaRS" id="TIMP4">
    <property type="organism name" value="human"/>
</dbReference>
<dbReference type="GeneWiki" id="TIMP4"/>
<dbReference type="GenomeRNAi" id="7079"/>
<dbReference type="Pharos" id="Q99727">
    <property type="development level" value="Tbio"/>
</dbReference>
<dbReference type="PRO" id="PR:Q99727"/>
<dbReference type="Proteomes" id="UP000005640">
    <property type="component" value="Chromosome 3"/>
</dbReference>
<dbReference type="RNAct" id="Q99727">
    <property type="molecule type" value="protein"/>
</dbReference>
<dbReference type="Bgee" id="ENSG00000157150">
    <property type="expression patterns" value="Expressed in adipose tissue of abdominal region and 153 other cell types or tissues"/>
</dbReference>
<dbReference type="GO" id="GO:0031012">
    <property type="term" value="C:extracellular matrix"/>
    <property type="evidence" value="ECO:0000318"/>
    <property type="project" value="GO_Central"/>
</dbReference>
<dbReference type="GO" id="GO:0005615">
    <property type="term" value="C:extracellular space"/>
    <property type="evidence" value="ECO:0000318"/>
    <property type="project" value="GO_Central"/>
</dbReference>
<dbReference type="GO" id="GO:0046872">
    <property type="term" value="F:metal ion binding"/>
    <property type="evidence" value="ECO:0007669"/>
    <property type="project" value="UniProtKB-KW"/>
</dbReference>
<dbReference type="GO" id="GO:0008191">
    <property type="term" value="F:metalloendopeptidase inhibitor activity"/>
    <property type="evidence" value="ECO:0000318"/>
    <property type="project" value="GO_Central"/>
</dbReference>
<dbReference type="GO" id="GO:0051045">
    <property type="term" value="P:negative regulation of membrane protein ectodomain proteolysis"/>
    <property type="evidence" value="ECO:0000318"/>
    <property type="project" value="GO_Central"/>
</dbReference>
<dbReference type="GO" id="GO:0007219">
    <property type="term" value="P:Notch signaling pathway"/>
    <property type="evidence" value="ECO:0007669"/>
    <property type="project" value="Ensembl"/>
</dbReference>
<dbReference type="GO" id="GO:0034097">
    <property type="term" value="P:response to cytokine"/>
    <property type="evidence" value="ECO:0000318"/>
    <property type="project" value="GO_Central"/>
</dbReference>
<dbReference type="GO" id="GO:0009725">
    <property type="term" value="P:response to hormone"/>
    <property type="evidence" value="ECO:0000318"/>
    <property type="project" value="GO_Central"/>
</dbReference>
<dbReference type="CDD" id="cd03585">
    <property type="entry name" value="NTR_TIMP"/>
    <property type="match status" value="1"/>
</dbReference>
<dbReference type="FunFam" id="3.90.370.10:FF:000001">
    <property type="entry name" value="Metalloproteinase inhibitor 3"/>
    <property type="match status" value="1"/>
</dbReference>
<dbReference type="FunFam" id="2.40.50.120:FF:000012">
    <property type="entry name" value="Metalloproteinase inhibitor 4"/>
    <property type="match status" value="1"/>
</dbReference>
<dbReference type="Gene3D" id="2.40.50.120">
    <property type="match status" value="1"/>
</dbReference>
<dbReference type="Gene3D" id="3.90.370.10">
    <property type="entry name" value="Tissue inhibitor of metalloproteinase-1. Chain B, domain 1"/>
    <property type="match status" value="1"/>
</dbReference>
<dbReference type="InterPro" id="IPR001134">
    <property type="entry name" value="Netrin_domain"/>
</dbReference>
<dbReference type="InterPro" id="IPR001820">
    <property type="entry name" value="TIMP"/>
</dbReference>
<dbReference type="InterPro" id="IPR008993">
    <property type="entry name" value="TIMP-like_OB-fold"/>
</dbReference>
<dbReference type="InterPro" id="IPR027465">
    <property type="entry name" value="TIMP_C"/>
</dbReference>
<dbReference type="InterPro" id="IPR030490">
    <property type="entry name" value="TIMP_CS"/>
</dbReference>
<dbReference type="PANTHER" id="PTHR11844">
    <property type="entry name" value="METALLOPROTEASE INHIBITOR"/>
    <property type="match status" value="1"/>
</dbReference>
<dbReference type="PANTHER" id="PTHR11844:SF26">
    <property type="entry name" value="METALLOPROTEINASE INHIBITOR 4"/>
    <property type="match status" value="1"/>
</dbReference>
<dbReference type="Pfam" id="PF00965">
    <property type="entry name" value="TIMP"/>
    <property type="match status" value="1"/>
</dbReference>
<dbReference type="SMART" id="SM00206">
    <property type="entry name" value="NTR"/>
    <property type="match status" value="1"/>
</dbReference>
<dbReference type="SUPFAM" id="SSF50242">
    <property type="entry name" value="TIMP-like"/>
    <property type="match status" value="1"/>
</dbReference>
<dbReference type="PROSITE" id="PS50189">
    <property type="entry name" value="NTR"/>
    <property type="match status" value="1"/>
</dbReference>
<dbReference type="PROSITE" id="PS00288">
    <property type="entry name" value="TIMP"/>
    <property type="match status" value="1"/>
</dbReference>
<gene>
    <name type="primary">TIMP4</name>
</gene>
<name>TIMP4_HUMAN</name>
<keyword id="KW-1015">Disulfide bond</keyword>
<keyword id="KW-0479">Metal-binding</keyword>
<keyword id="KW-0481">Metalloenzyme inhibitor</keyword>
<keyword id="KW-0483">Metalloprotease inhibitor</keyword>
<keyword id="KW-0646">Protease inhibitor</keyword>
<keyword id="KW-1267">Proteomics identification</keyword>
<keyword id="KW-1185">Reference proteome</keyword>
<keyword id="KW-0964">Secreted</keyword>
<keyword id="KW-0732">Signal</keyword>
<keyword id="KW-0862">Zinc</keyword>
<sequence>MPGSPRPAPSWVLLLRLLALLRPPGLGEACSCAPAHPQQHICHSALVIRAKISSEKVVPASADPADTEKMLRYEIKQIKMFKGFEKVKDVQYIYTPFDSSLCGVKLEANSQKQYLLTGQVLSDGKVFIHLCNYIEPWEDLSLVQRESLNHHYHLNCGCQITTCYTVPCTISAPNECLWTDWLLERKLYGYQAQHYVCMKHVDGTCSWYRGHLPLRKEFVDIVQP</sequence>
<accession>Q99727</accession>
<accession>B2R7K6</accession>
<evidence type="ECO:0000250" key="1">
    <source>
        <dbReference type="UniProtKB" id="P16035"/>
    </source>
</evidence>
<evidence type="ECO:0000255" key="2"/>
<evidence type="ECO:0000255" key="3">
    <source>
        <dbReference type="PROSITE-ProRule" id="PRU00295"/>
    </source>
</evidence>
<evidence type="ECO:0000305" key="4"/>